<protein>
    <recommendedName>
        <fullName>Transcription initiation factor TFIID subunit 10</fullName>
    </recommendedName>
    <alternativeName>
        <fullName>Protein SALT TOLERANCE DURING GERMINATION 1</fullName>
    </alternativeName>
    <alternativeName>
        <fullName>TBP-associated factor 10</fullName>
        <shortName>AtTAF10</shortName>
    </alternativeName>
    <alternativeName>
        <fullName>TBP-associated factor II 15</fullName>
    </alternativeName>
</protein>
<sequence>MNHGQQSGEAKHEDDAALTEFLASLMDYTPTIPDDLVEHYLAKSGFQCPDVRLIRLVAVATQKFVADVASDALQHCKARPAPVVKDKKQQKDKRLVLTMEDLSKALREYGVNVKHPEYFADSPSTGMDPATRDE</sequence>
<proteinExistence type="evidence at protein level"/>
<feature type="chain" id="PRO_0000424047" description="Transcription initiation factor TFIID subunit 10">
    <location>
        <begin position="1"/>
        <end position="134"/>
    </location>
</feature>
<feature type="sequence conflict" description="In Ref. 6; BAC42469 and 7; AAO42970." evidence="5" ref="6 7">
    <original>A</original>
    <variation>V</variation>
    <location>
        <position position="130"/>
    </location>
</feature>
<organism>
    <name type="scientific">Arabidopsis thaliana</name>
    <name type="common">Mouse-ear cress</name>
    <dbReference type="NCBI Taxonomy" id="3702"/>
    <lineage>
        <taxon>Eukaryota</taxon>
        <taxon>Viridiplantae</taxon>
        <taxon>Streptophyta</taxon>
        <taxon>Embryophyta</taxon>
        <taxon>Tracheophyta</taxon>
        <taxon>Spermatophyta</taxon>
        <taxon>Magnoliopsida</taxon>
        <taxon>eudicotyledons</taxon>
        <taxon>Gunneridae</taxon>
        <taxon>Pentapetalae</taxon>
        <taxon>rosids</taxon>
        <taxon>malvids</taxon>
        <taxon>Brassicales</taxon>
        <taxon>Brassicaceae</taxon>
        <taxon>Camelineae</taxon>
        <taxon>Arabidopsis</taxon>
    </lineage>
</organism>
<reference key="1">
    <citation type="journal article" date="2004" name="Gene">
        <title>TBP-associated factors in Arabidopsis.</title>
        <authorList>
            <person name="Lago C."/>
            <person name="Clerici E."/>
            <person name="Mizzi L."/>
            <person name="Colombo L."/>
            <person name="Kater M.M."/>
        </authorList>
    </citation>
    <scope>NUCLEOTIDE SEQUENCE [MRNA]</scope>
    <scope>IDENTIFICATION</scope>
    <scope>NOMENCLATURE</scope>
    <scope>TISSUE SPECIFICITY</scope>
</reference>
<reference key="2">
    <citation type="journal article" date="2007" name="Plant Mol. Biol.">
        <title>Yeast two-hybrid map of Arabidopsis TFIID.</title>
        <authorList>
            <person name="Lawit S.J."/>
            <person name="O'Grady K."/>
            <person name="Gurley W.B."/>
            <person name="Czarnecka-Verner E."/>
        </authorList>
    </citation>
    <scope>NUCLEOTIDE SEQUENCE [MRNA]</scope>
    <scope>SUBUNIT</scope>
    <scope>INTERACTION WITH TAF4; TAF4B; TAF8; TAF9; TAF12B AND TAF13</scope>
    <source>
        <strain>cv. Columbia</strain>
    </source>
</reference>
<reference key="3">
    <citation type="submission" date="1997-04" db="EMBL/GenBank/DDBJ databases">
        <authorList>
            <person name="Schwechheimer C."/>
        </authorList>
    </citation>
    <scope>NUCLEOTIDE SEQUENCE [MRNA]</scope>
    <source>
        <strain>cv. Columbia</strain>
        <tissue>Aerial part</tissue>
    </source>
</reference>
<reference key="4">
    <citation type="journal article" date="1999" name="Nature">
        <title>Sequence and analysis of chromosome 4 of the plant Arabidopsis thaliana.</title>
        <authorList>
            <person name="Mayer K.F.X."/>
            <person name="Schueller C."/>
            <person name="Wambutt R."/>
            <person name="Murphy G."/>
            <person name="Volckaert G."/>
            <person name="Pohl T."/>
            <person name="Duesterhoeft A."/>
            <person name="Stiekema W."/>
            <person name="Entian K.-D."/>
            <person name="Terryn N."/>
            <person name="Harris B."/>
            <person name="Ansorge W."/>
            <person name="Brandt P."/>
            <person name="Grivell L.A."/>
            <person name="Rieger M."/>
            <person name="Weichselgartner M."/>
            <person name="de Simone V."/>
            <person name="Obermaier B."/>
            <person name="Mache R."/>
            <person name="Mueller M."/>
            <person name="Kreis M."/>
            <person name="Delseny M."/>
            <person name="Puigdomenech P."/>
            <person name="Watson M."/>
            <person name="Schmidtheini T."/>
            <person name="Reichert B."/>
            <person name="Portetelle D."/>
            <person name="Perez-Alonso M."/>
            <person name="Boutry M."/>
            <person name="Bancroft I."/>
            <person name="Vos P."/>
            <person name="Hoheisel J."/>
            <person name="Zimmermann W."/>
            <person name="Wedler H."/>
            <person name="Ridley P."/>
            <person name="Langham S.-A."/>
            <person name="McCullagh B."/>
            <person name="Bilham L."/>
            <person name="Robben J."/>
            <person name="van der Schueren J."/>
            <person name="Grymonprez B."/>
            <person name="Chuang Y.-J."/>
            <person name="Vandenbussche F."/>
            <person name="Braeken M."/>
            <person name="Weltjens I."/>
            <person name="Voet M."/>
            <person name="Bastiaens I."/>
            <person name="Aert R."/>
            <person name="Defoor E."/>
            <person name="Weitzenegger T."/>
            <person name="Bothe G."/>
            <person name="Ramsperger U."/>
            <person name="Hilbert H."/>
            <person name="Braun M."/>
            <person name="Holzer E."/>
            <person name="Brandt A."/>
            <person name="Peters S."/>
            <person name="van Staveren M."/>
            <person name="Dirkse W."/>
            <person name="Mooijman P."/>
            <person name="Klein Lankhorst R."/>
            <person name="Rose M."/>
            <person name="Hauf J."/>
            <person name="Koetter P."/>
            <person name="Berneiser S."/>
            <person name="Hempel S."/>
            <person name="Feldpausch M."/>
            <person name="Lamberth S."/>
            <person name="Van den Daele H."/>
            <person name="De Keyser A."/>
            <person name="Buysshaert C."/>
            <person name="Gielen J."/>
            <person name="Villarroel R."/>
            <person name="De Clercq R."/>
            <person name="van Montagu M."/>
            <person name="Rogers J."/>
            <person name="Cronin A."/>
            <person name="Quail M.A."/>
            <person name="Bray-Allen S."/>
            <person name="Clark L."/>
            <person name="Doggett J."/>
            <person name="Hall S."/>
            <person name="Kay M."/>
            <person name="Lennard N."/>
            <person name="McLay K."/>
            <person name="Mayes R."/>
            <person name="Pettett A."/>
            <person name="Rajandream M.A."/>
            <person name="Lyne M."/>
            <person name="Benes V."/>
            <person name="Rechmann S."/>
            <person name="Borkova D."/>
            <person name="Bloecker H."/>
            <person name="Scharfe M."/>
            <person name="Grimm M."/>
            <person name="Loehnert T.-H."/>
            <person name="Dose S."/>
            <person name="de Haan M."/>
            <person name="Maarse A.C."/>
            <person name="Schaefer M."/>
            <person name="Mueller-Auer S."/>
            <person name="Gabel C."/>
            <person name="Fuchs M."/>
            <person name="Fartmann B."/>
            <person name="Granderath K."/>
            <person name="Dauner D."/>
            <person name="Herzl A."/>
            <person name="Neumann S."/>
            <person name="Argiriou A."/>
            <person name="Vitale D."/>
            <person name="Liguori R."/>
            <person name="Piravandi E."/>
            <person name="Massenet O."/>
            <person name="Quigley F."/>
            <person name="Clabauld G."/>
            <person name="Muendlein A."/>
            <person name="Felber R."/>
            <person name="Schnabl S."/>
            <person name="Hiller R."/>
            <person name="Schmidt W."/>
            <person name="Lecharny A."/>
            <person name="Aubourg S."/>
            <person name="Chefdor F."/>
            <person name="Cooke R."/>
            <person name="Berger C."/>
            <person name="Monfort A."/>
            <person name="Casacuberta E."/>
            <person name="Gibbons T."/>
            <person name="Weber N."/>
            <person name="Vandenbol M."/>
            <person name="Bargues M."/>
            <person name="Terol J."/>
            <person name="Torres A."/>
            <person name="Perez-Perez A."/>
            <person name="Purnelle B."/>
            <person name="Bent E."/>
            <person name="Johnson S."/>
            <person name="Tacon D."/>
            <person name="Jesse T."/>
            <person name="Heijnen L."/>
            <person name="Schwarz S."/>
            <person name="Scholler P."/>
            <person name="Heber S."/>
            <person name="Francs P."/>
            <person name="Bielke C."/>
            <person name="Frishman D."/>
            <person name="Haase D."/>
            <person name="Lemcke K."/>
            <person name="Mewes H.-W."/>
            <person name="Stocker S."/>
            <person name="Zaccaria P."/>
            <person name="Bevan M."/>
            <person name="Wilson R.K."/>
            <person name="de la Bastide M."/>
            <person name="Habermann K."/>
            <person name="Parnell L."/>
            <person name="Dedhia N."/>
            <person name="Gnoj L."/>
            <person name="Schutz K."/>
            <person name="Huang E."/>
            <person name="Spiegel L."/>
            <person name="Sekhon M."/>
            <person name="Murray J."/>
            <person name="Sheet P."/>
            <person name="Cordes M."/>
            <person name="Abu-Threideh J."/>
            <person name="Stoneking T."/>
            <person name="Kalicki J."/>
            <person name="Graves T."/>
            <person name="Harmon G."/>
            <person name="Edwards J."/>
            <person name="Latreille P."/>
            <person name="Courtney L."/>
            <person name="Cloud J."/>
            <person name="Abbott A."/>
            <person name="Scott K."/>
            <person name="Johnson D."/>
            <person name="Minx P."/>
            <person name="Bentley D."/>
            <person name="Fulton B."/>
            <person name="Miller N."/>
            <person name="Greco T."/>
            <person name="Kemp K."/>
            <person name="Kramer J."/>
            <person name="Fulton L."/>
            <person name="Mardis E."/>
            <person name="Dante M."/>
            <person name="Pepin K."/>
            <person name="Hillier L.W."/>
            <person name="Nelson J."/>
            <person name="Spieth J."/>
            <person name="Ryan E."/>
            <person name="Andrews S."/>
            <person name="Geisel C."/>
            <person name="Layman D."/>
            <person name="Du H."/>
            <person name="Ali J."/>
            <person name="Berghoff A."/>
            <person name="Jones K."/>
            <person name="Drone K."/>
            <person name="Cotton M."/>
            <person name="Joshu C."/>
            <person name="Antonoiu B."/>
            <person name="Zidanic M."/>
            <person name="Strong C."/>
            <person name="Sun H."/>
            <person name="Lamar B."/>
            <person name="Yordan C."/>
            <person name="Ma P."/>
            <person name="Zhong J."/>
            <person name="Preston R."/>
            <person name="Vil D."/>
            <person name="Shekher M."/>
            <person name="Matero A."/>
            <person name="Shah R."/>
            <person name="Swaby I.K."/>
            <person name="O'Shaughnessy A."/>
            <person name="Rodriguez M."/>
            <person name="Hoffman J."/>
            <person name="Till S."/>
            <person name="Granat S."/>
            <person name="Shohdy N."/>
            <person name="Hasegawa A."/>
            <person name="Hameed A."/>
            <person name="Lodhi M."/>
            <person name="Johnson A."/>
            <person name="Chen E."/>
            <person name="Marra M.A."/>
            <person name="Martienssen R."/>
            <person name="McCombie W.R."/>
        </authorList>
    </citation>
    <scope>NUCLEOTIDE SEQUENCE [LARGE SCALE GENOMIC DNA]</scope>
    <source>
        <strain>cv. Columbia</strain>
    </source>
</reference>
<reference key="5">
    <citation type="journal article" date="2017" name="Plant J.">
        <title>Araport11: a complete reannotation of the Arabidopsis thaliana reference genome.</title>
        <authorList>
            <person name="Cheng C.Y."/>
            <person name="Krishnakumar V."/>
            <person name="Chan A.P."/>
            <person name="Thibaud-Nissen F."/>
            <person name="Schobel S."/>
            <person name="Town C.D."/>
        </authorList>
    </citation>
    <scope>GENOME REANNOTATION</scope>
    <source>
        <strain>cv. Columbia</strain>
    </source>
</reference>
<reference key="6">
    <citation type="journal article" date="2002" name="Science">
        <title>Functional annotation of a full-length Arabidopsis cDNA collection.</title>
        <authorList>
            <person name="Seki M."/>
            <person name="Narusaka M."/>
            <person name="Kamiya A."/>
            <person name="Ishida J."/>
            <person name="Satou M."/>
            <person name="Sakurai T."/>
            <person name="Nakajima M."/>
            <person name="Enju A."/>
            <person name="Akiyama K."/>
            <person name="Oono Y."/>
            <person name="Muramatsu M."/>
            <person name="Hayashizaki Y."/>
            <person name="Kawai J."/>
            <person name="Carninci P."/>
            <person name="Itoh M."/>
            <person name="Ishii Y."/>
            <person name="Arakawa T."/>
            <person name="Shibata K."/>
            <person name="Shinagawa A."/>
            <person name="Shinozaki K."/>
        </authorList>
    </citation>
    <scope>NUCLEOTIDE SEQUENCE [LARGE SCALE MRNA]</scope>
    <source>
        <strain>cv. Columbia</strain>
    </source>
</reference>
<reference key="7">
    <citation type="journal article" date="2003" name="Science">
        <title>Empirical analysis of transcriptional activity in the Arabidopsis genome.</title>
        <authorList>
            <person name="Yamada K."/>
            <person name="Lim J."/>
            <person name="Dale J.M."/>
            <person name="Chen H."/>
            <person name="Shinn P."/>
            <person name="Palm C.J."/>
            <person name="Southwick A.M."/>
            <person name="Wu H.C."/>
            <person name="Kim C.J."/>
            <person name="Nguyen M."/>
            <person name="Pham P.K."/>
            <person name="Cheuk R.F."/>
            <person name="Karlin-Newmann G."/>
            <person name="Liu S.X."/>
            <person name="Lam B."/>
            <person name="Sakano H."/>
            <person name="Wu T."/>
            <person name="Yu G."/>
            <person name="Miranda M."/>
            <person name="Quach H.L."/>
            <person name="Tripp M."/>
            <person name="Chang C.H."/>
            <person name="Lee J.M."/>
            <person name="Toriumi M.J."/>
            <person name="Chan M.M."/>
            <person name="Tang C.C."/>
            <person name="Onodera C.S."/>
            <person name="Deng J.M."/>
            <person name="Akiyama K."/>
            <person name="Ansari Y."/>
            <person name="Arakawa T."/>
            <person name="Banh J."/>
            <person name="Banno F."/>
            <person name="Bowser L."/>
            <person name="Brooks S.Y."/>
            <person name="Carninci P."/>
            <person name="Chao Q."/>
            <person name="Choy N."/>
            <person name="Enju A."/>
            <person name="Goldsmith A.D."/>
            <person name="Gurjal M."/>
            <person name="Hansen N.F."/>
            <person name="Hayashizaki Y."/>
            <person name="Johnson-Hopson C."/>
            <person name="Hsuan V.W."/>
            <person name="Iida K."/>
            <person name="Karnes M."/>
            <person name="Khan S."/>
            <person name="Koesema E."/>
            <person name="Ishida J."/>
            <person name="Jiang P.X."/>
            <person name="Jones T."/>
            <person name="Kawai J."/>
            <person name="Kamiya A."/>
            <person name="Meyers C."/>
            <person name="Nakajima M."/>
            <person name="Narusaka M."/>
            <person name="Seki M."/>
            <person name="Sakurai T."/>
            <person name="Satou M."/>
            <person name="Tamse R."/>
            <person name="Vaysberg M."/>
            <person name="Wallender E.K."/>
            <person name="Wong C."/>
            <person name="Yamamura Y."/>
            <person name="Yuan S."/>
            <person name="Shinozaki K."/>
            <person name="Davis R.W."/>
            <person name="Theologis A."/>
            <person name="Ecker J.R."/>
        </authorList>
    </citation>
    <scope>NUCLEOTIDE SEQUENCE [LARGE SCALE MRNA]</scope>
    <source>
        <strain>cv. Columbia</strain>
    </source>
</reference>
<reference key="8">
    <citation type="journal article" date="2009" name="DNA Res.">
        <title>Analysis of multiple occurrences of alternative splicing events in Arabidopsis thaliana using novel sequenced full-length cDNAs.</title>
        <authorList>
            <person name="Iida K."/>
            <person name="Fukami-Kobayashi K."/>
            <person name="Toyoda A."/>
            <person name="Sakaki Y."/>
            <person name="Kobayashi M."/>
            <person name="Seki M."/>
            <person name="Shinozaki K."/>
        </authorList>
    </citation>
    <scope>NUCLEOTIDE SEQUENCE [LARGE SCALE MRNA]</scope>
    <source>
        <strain>cv. Columbia</strain>
        <tissue>Rosette leaf</tissue>
    </source>
</reference>
<reference key="9">
    <citation type="submission" date="2002-03" db="EMBL/GenBank/DDBJ databases">
        <title>Full-length cDNA from Arabidopsis thaliana.</title>
        <authorList>
            <person name="Brover V.V."/>
            <person name="Troukhan M.E."/>
            <person name="Alexandrov N.A."/>
            <person name="Lu Y.-P."/>
            <person name="Flavell R.B."/>
            <person name="Feldmann K.A."/>
        </authorList>
    </citation>
    <scope>NUCLEOTIDE SEQUENCE [LARGE SCALE MRNA]</scope>
</reference>
<reference key="10">
    <citation type="journal article" date="2006" name="Plant Cell Physiol.">
        <title>The Arabidopsis mutant stg1 identifies a function for TBP-associated factor 10 in plant osmotic stress adaptation.</title>
        <authorList>
            <person name="Gao X."/>
            <person name="Ren F."/>
            <person name="Lu Y.T."/>
        </authorList>
    </citation>
    <scope>FUNCTION</scope>
    <source>
        <strain>cv. Columbia</strain>
    </source>
</reference>
<reference key="11">
    <citation type="journal article" date="2007" name="Plant Cell Physiol.">
        <title>Temporary expression of the TAF10 gene and its requirement for normal development of Arabidopsis thaliana.</title>
        <authorList>
            <person name="Tamada Y."/>
            <person name="Nakamori K."/>
            <person name="Nakatani H."/>
            <person name="Matsuda K."/>
            <person name="Hata S."/>
            <person name="Furumoto T."/>
            <person name="Izui K."/>
        </authorList>
    </citation>
    <scope>FUNCTION</scope>
    <scope>DEVELOPMENTAL STAGE</scope>
    <scope>INDUCTION BY AUXIN AND CYTOKININ</scope>
    <scope>TISSUE SPECIFICITY</scope>
</reference>
<gene>
    <name type="primary">TAF10</name>
    <name type="synonym">SGT1</name>
    <name type="synonym">TAFII15</name>
    <name type="ordered locus">At4g31720</name>
    <name type="ORF">F28M20.90</name>
</gene>
<accession>O04173</accession>
<accession>Q8GY69</accession>
<comment type="function">
    <text evidence="2 3">TAFs are components of the transcription factor IID (TFIID) complex that is essential for mediating regulation of RNA polymerase transcription. Involved in osmotic stress adaptation during the germination stage and in gene expression related to meristem activity and leaf development.</text>
</comment>
<comment type="subunit">
    <text evidence="4">Component of the TFIID complex. TFIID is composed of TATA binding protein (TBP) and a number of TBP-associated factors (TAFs) whose MWs range from 14-217 kDa. Can homodimerize. Interacts with TAF4, TAF4B, TAF8, TAF9, TAF12B and TAF13.</text>
</comment>
<comment type="interaction">
    <interactant intactId="EBI-1247479">
        <id>O04173</id>
    </interactant>
    <interactant intactId="EBI-1245557">
        <id>F4HVA6</id>
        <label>TAF6B</label>
    </interactant>
    <organismsDiffer>false</organismsDiffer>
    <experiments>3</experiments>
</comment>
<comment type="interaction">
    <interactant intactId="EBI-1247479">
        <id>O04173</id>
    </interactant>
    <interactant intactId="EBI-1247615">
        <id>Q9SYZ9</id>
        <label>TAF8</label>
    </interactant>
    <organismsDiffer>false</organismsDiffer>
    <experiments>3</experiments>
</comment>
<comment type="subcellular location">
    <subcellularLocation>
        <location evidence="5">Nucleus</location>
    </subcellularLocation>
</comment>
<comment type="tissue specificity">
    <text evidence="1 3">Expressed in roots, stems, leaves and inflorescences. Expressed preferentially in the vascular bundles and bundle sheath cells of cotyledons, the phloem of hypocotyls and the central cylinders of roots.</text>
</comment>
<comment type="developmental stage">
    <text evidence="3">Expressed transiently during the development of several organs such as lateral roots, rosette leaves and most floral organs.</text>
</comment>
<comment type="induction">
    <text evidence="3">Up-regulated by auxin and cytokinin.</text>
</comment>
<comment type="miscellaneous">
    <text evidence="6 7">Overexpression of TAF10 results in salt tolerance during seed germination while knock-down mutants are more sensitive to osmotic stress (PubMed:16945932) and display several abnormal phenotypes involved in meristem activity and leaf development (PubMed:17148695).</text>
</comment>
<comment type="similarity">
    <text evidence="5">Belongs to the TAF10 family.</text>
</comment>
<name>TAF10_ARATH</name>
<keyword id="KW-0010">Activator</keyword>
<keyword id="KW-0539">Nucleus</keyword>
<keyword id="KW-1185">Reference proteome</keyword>
<keyword id="KW-0804">Transcription</keyword>
<keyword id="KW-0805">Transcription regulation</keyword>
<dbReference type="EMBL" id="AY463628">
    <property type="protein sequence ID" value="AAR28030.1"/>
    <property type="molecule type" value="mRNA"/>
</dbReference>
<dbReference type="EMBL" id="AF352813">
    <property type="protein sequence ID" value="AAK29671.1"/>
    <property type="molecule type" value="mRNA"/>
</dbReference>
<dbReference type="EMBL" id="AF344879">
    <property type="protein sequence ID" value="AAK28290.1"/>
    <property type="molecule type" value="mRNA"/>
</dbReference>
<dbReference type="EMBL" id="Y12904">
    <property type="protein sequence ID" value="CAA73389.1"/>
    <property type="molecule type" value="mRNA"/>
</dbReference>
<dbReference type="EMBL" id="AL031004">
    <property type="protein sequence ID" value="CAA19751.1"/>
    <property type="molecule type" value="Genomic_DNA"/>
</dbReference>
<dbReference type="EMBL" id="AL161579">
    <property type="protein sequence ID" value="CAB79890.1"/>
    <property type="molecule type" value="Genomic_DNA"/>
</dbReference>
<dbReference type="EMBL" id="CP002687">
    <property type="protein sequence ID" value="AEE85949.1"/>
    <property type="molecule type" value="Genomic_DNA"/>
</dbReference>
<dbReference type="EMBL" id="CP002687">
    <property type="protein sequence ID" value="AEE85950.1"/>
    <property type="molecule type" value="Genomic_DNA"/>
</dbReference>
<dbReference type="EMBL" id="CP002687">
    <property type="protein sequence ID" value="ANM67738.1"/>
    <property type="molecule type" value="Genomic_DNA"/>
</dbReference>
<dbReference type="EMBL" id="AK117827">
    <property type="protein sequence ID" value="BAC42469.1"/>
    <property type="molecule type" value="mRNA"/>
</dbReference>
<dbReference type="EMBL" id="BT004724">
    <property type="protein sequence ID" value="AAO42970.1"/>
    <property type="molecule type" value="mRNA"/>
</dbReference>
<dbReference type="EMBL" id="AK317292">
    <property type="protein sequence ID" value="BAH19968.1"/>
    <property type="molecule type" value="mRNA"/>
</dbReference>
<dbReference type="EMBL" id="AY086560">
    <property type="protein sequence ID" value="AAM63623.1"/>
    <property type="molecule type" value="mRNA"/>
</dbReference>
<dbReference type="PIR" id="T05098">
    <property type="entry name" value="T05098"/>
</dbReference>
<dbReference type="RefSeq" id="NP_001329548.1">
    <property type="nucleotide sequence ID" value="NM_001342109.1"/>
</dbReference>
<dbReference type="RefSeq" id="NP_194900.1">
    <property type="nucleotide sequence ID" value="NM_119321.4"/>
</dbReference>
<dbReference type="RefSeq" id="NP_849481.1">
    <property type="nucleotide sequence ID" value="NM_179150.4"/>
</dbReference>
<dbReference type="SMR" id="O04173"/>
<dbReference type="BioGRID" id="14586">
    <property type="interactions" value="17"/>
</dbReference>
<dbReference type="FunCoup" id="O04173">
    <property type="interactions" value="2759"/>
</dbReference>
<dbReference type="IntAct" id="O04173">
    <property type="interactions" value="16"/>
</dbReference>
<dbReference type="STRING" id="3702.O04173"/>
<dbReference type="iPTMnet" id="O04173"/>
<dbReference type="PaxDb" id="3702-AT4G31720.1"/>
<dbReference type="ProteomicsDB" id="234120"/>
<dbReference type="EnsemblPlants" id="AT4G31720.1">
    <property type="protein sequence ID" value="AT4G31720.1"/>
    <property type="gene ID" value="AT4G31720"/>
</dbReference>
<dbReference type="EnsemblPlants" id="AT4G31720.2">
    <property type="protein sequence ID" value="AT4G31720.2"/>
    <property type="gene ID" value="AT4G31720"/>
</dbReference>
<dbReference type="EnsemblPlants" id="AT4G31720.3">
    <property type="protein sequence ID" value="AT4G31720.3"/>
    <property type="gene ID" value="AT4G31720"/>
</dbReference>
<dbReference type="GeneID" id="829300"/>
<dbReference type="Gramene" id="AT4G31720.1">
    <property type="protein sequence ID" value="AT4G31720.1"/>
    <property type="gene ID" value="AT4G31720"/>
</dbReference>
<dbReference type="Gramene" id="AT4G31720.2">
    <property type="protein sequence ID" value="AT4G31720.2"/>
    <property type="gene ID" value="AT4G31720"/>
</dbReference>
<dbReference type="Gramene" id="AT4G31720.3">
    <property type="protein sequence ID" value="AT4G31720.3"/>
    <property type="gene ID" value="AT4G31720"/>
</dbReference>
<dbReference type="KEGG" id="ath:AT4G31720"/>
<dbReference type="Araport" id="AT4G31720"/>
<dbReference type="TAIR" id="AT4G31720">
    <property type="gene designation" value="TAFII15"/>
</dbReference>
<dbReference type="eggNOG" id="KOG3423">
    <property type="taxonomic scope" value="Eukaryota"/>
</dbReference>
<dbReference type="HOGENOM" id="CLU_064104_4_1_1"/>
<dbReference type="InParanoid" id="O04173"/>
<dbReference type="OMA" id="NRWRWIR"/>
<dbReference type="PhylomeDB" id="O04173"/>
<dbReference type="PRO" id="PR:O04173"/>
<dbReference type="Proteomes" id="UP000006548">
    <property type="component" value="Chromosome 4"/>
</dbReference>
<dbReference type="ExpressionAtlas" id="O04173">
    <property type="expression patterns" value="baseline and differential"/>
</dbReference>
<dbReference type="GO" id="GO:0005634">
    <property type="term" value="C:nucleus"/>
    <property type="evidence" value="ECO:0007669"/>
    <property type="project" value="UniProtKB-SubCell"/>
</dbReference>
<dbReference type="GO" id="GO:0006352">
    <property type="term" value="P:DNA-templated transcription initiation"/>
    <property type="evidence" value="ECO:0007669"/>
    <property type="project" value="InterPro"/>
</dbReference>
<dbReference type="CDD" id="cd07982">
    <property type="entry name" value="HFD_TAF10"/>
    <property type="match status" value="1"/>
</dbReference>
<dbReference type="InterPro" id="IPR003923">
    <property type="entry name" value="TAF10"/>
</dbReference>
<dbReference type="PANTHER" id="PTHR21242">
    <property type="entry name" value="TRANSCRIPTION INITIATION FACTOR TFIID SUBUNIT 10"/>
    <property type="match status" value="1"/>
</dbReference>
<dbReference type="PANTHER" id="PTHR21242:SF0">
    <property type="entry name" value="TRANSCRIPTION INITIATION FACTOR TFIID SUBUNIT 10"/>
    <property type="match status" value="1"/>
</dbReference>
<dbReference type="Pfam" id="PF03540">
    <property type="entry name" value="TAF10"/>
    <property type="match status" value="1"/>
</dbReference>
<dbReference type="PIRSF" id="PIRSF017246">
    <property type="entry name" value="TFIID_TAF10"/>
    <property type="match status" value="1"/>
</dbReference>
<dbReference type="PRINTS" id="PR01443">
    <property type="entry name" value="TFIID30KDSUB"/>
</dbReference>
<evidence type="ECO:0000269" key="1">
    <source>
    </source>
</evidence>
<evidence type="ECO:0000269" key="2">
    <source>
    </source>
</evidence>
<evidence type="ECO:0000269" key="3">
    <source>
    </source>
</evidence>
<evidence type="ECO:0000269" key="4">
    <source>
    </source>
</evidence>
<evidence type="ECO:0000305" key="5"/>
<evidence type="ECO:0000305" key="6">
    <source>
    </source>
</evidence>
<evidence type="ECO:0000305" key="7">
    <source>
    </source>
</evidence>